<comment type="function">
    <text evidence="4">Natriuretic peptide that dose-dependently induces the rapid relaxation of rat aortic strips phenylephrine-precontracted. Acts by stimulating cGMP production in a dose-dependent manner (by probably activating NPR1 and/or NPR2). May also show potent hypotensive effects.</text>
</comment>
<comment type="subcellular location">
    <subcellularLocation>
        <location evidence="4">Secreted</location>
    </subcellularLocation>
</comment>
<comment type="tissue specificity">
    <text evidence="7">Expressed by the venom gland.</text>
</comment>
<comment type="mass spectrometry" mass="4618.5" method="MALDI" evidence="4"/>
<comment type="miscellaneous">
    <text evidence="7">Negative results: does not inhibit platelet aggregation.</text>
</comment>
<comment type="similarity">
    <text evidence="6">Belongs to the natriuretic peptide family.</text>
</comment>
<organism>
    <name type="scientific">Naja atra</name>
    <name type="common">Chinese cobra</name>
    <dbReference type="NCBI Taxonomy" id="8656"/>
    <lineage>
        <taxon>Eukaryota</taxon>
        <taxon>Metazoa</taxon>
        <taxon>Chordata</taxon>
        <taxon>Craniata</taxon>
        <taxon>Vertebrata</taxon>
        <taxon>Euteleostomi</taxon>
        <taxon>Lepidosauria</taxon>
        <taxon>Squamata</taxon>
        <taxon>Bifurcata</taxon>
        <taxon>Unidentata</taxon>
        <taxon>Episquamata</taxon>
        <taxon>Toxicofera</taxon>
        <taxon>Serpentes</taxon>
        <taxon>Colubroidea</taxon>
        <taxon>Elapidae</taxon>
        <taxon>Elapinae</taxon>
        <taxon>Naja</taxon>
    </lineage>
</organism>
<proteinExistence type="evidence at protein level"/>
<evidence type="ECO:0000250" key="1">
    <source>
        <dbReference type="UniProtKB" id="P28374"/>
    </source>
</evidence>
<evidence type="ECO:0000255" key="2"/>
<evidence type="ECO:0000256" key="3">
    <source>
        <dbReference type="SAM" id="MobiDB-lite"/>
    </source>
</evidence>
<evidence type="ECO:0000269" key="4">
    <source>
    </source>
</evidence>
<evidence type="ECO:0000303" key="5">
    <source>
    </source>
</evidence>
<evidence type="ECO:0000305" key="6"/>
<evidence type="ECO:0000305" key="7">
    <source>
    </source>
</evidence>
<reference key="1">
    <citation type="journal article" date="2011" name="Toxicon">
        <title>A novel natriuretic peptide from the cobra venom.</title>
        <authorList>
            <person name="Zhang Y."/>
            <person name="Wu J."/>
            <person name="Yu G."/>
            <person name="Chen Z."/>
            <person name="Zhou X."/>
            <person name="Zhu S."/>
            <person name="Li R."/>
            <person name="Zhang Y."/>
            <person name="Lu Q."/>
        </authorList>
    </citation>
    <scope>NUCLEOTIDE SEQUENCE [MRNA]</scope>
    <scope>PROTEIN SEQUENCE OF 84-128</scope>
    <scope>FUNCTION</scope>
    <scope>MASS SPECTROMETRY</scope>
    <scope>SUBCELLULAR LOCATION</scope>
    <source>
        <tissue>Venom</tissue>
        <tissue>Venom gland</tissue>
    </source>
</reference>
<sequence length="165" mass="17345">MVGLSRLAGGGLLLVLALLPLALDGKPAPEALHKPPTGLRTSLAALRILGYLRPDSKQSRAARDRMLHPEQQVGGGGDSRPLQDETNKGKGSSCFGQKIDRIGSMSGMGCRTQGKPPPALPTAPAALRILEYLRPDSKRSRATRDRMLHPEQQVGGGGGGGSRVI</sequence>
<dbReference type="EMBL" id="HM217215">
    <property type="protein sequence ID" value="ADK12001.1"/>
    <property type="molecule type" value="mRNA"/>
</dbReference>
<dbReference type="GO" id="GO:0005576">
    <property type="term" value="C:extracellular region"/>
    <property type="evidence" value="ECO:0007669"/>
    <property type="project" value="UniProtKB-SubCell"/>
</dbReference>
<dbReference type="GO" id="GO:0005179">
    <property type="term" value="F:hormone activity"/>
    <property type="evidence" value="ECO:0007669"/>
    <property type="project" value="InterPro"/>
</dbReference>
<dbReference type="GO" id="GO:0090729">
    <property type="term" value="F:toxin activity"/>
    <property type="evidence" value="ECO:0007669"/>
    <property type="project" value="UniProtKB-KW"/>
</dbReference>
<dbReference type="GO" id="GO:0006182">
    <property type="term" value="P:cGMP biosynthetic process"/>
    <property type="evidence" value="ECO:0007669"/>
    <property type="project" value="TreeGrafter"/>
</dbReference>
<dbReference type="GO" id="GO:0007168">
    <property type="term" value="P:receptor guanylyl cyclase signaling pathway"/>
    <property type="evidence" value="ECO:0007669"/>
    <property type="project" value="TreeGrafter"/>
</dbReference>
<dbReference type="GO" id="GO:0008217">
    <property type="term" value="P:regulation of blood pressure"/>
    <property type="evidence" value="ECO:0007669"/>
    <property type="project" value="UniProtKB-KW"/>
</dbReference>
<dbReference type="GO" id="GO:0042311">
    <property type="term" value="P:vasodilation"/>
    <property type="evidence" value="ECO:0007669"/>
    <property type="project" value="UniProtKB-KW"/>
</dbReference>
<dbReference type="GO" id="GO:0044551">
    <property type="term" value="P:venom-mediated vasodilation in another organism"/>
    <property type="evidence" value="ECO:0000314"/>
    <property type="project" value="UniProtKB"/>
</dbReference>
<dbReference type="InterPro" id="IPR000663">
    <property type="entry name" value="Natr_peptide"/>
</dbReference>
<dbReference type="InterPro" id="IPR030480">
    <property type="entry name" value="Natr_peptide_CS"/>
</dbReference>
<dbReference type="InterPro" id="IPR002408">
    <property type="entry name" value="Natriuretic_peptide_brain"/>
</dbReference>
<dbReference type="PANTHER" id="PTHR12167">
    <property type="entry name" value="C-TYPE NATRIURETIC PEPTIDE"/>
    <property type="match status" value="1"/>
</dbReference>
<dbReference type="PANTHER" id="PTHR12167:SF2">
    <property type="entry name" value="C-TYPE NATRIURETIC PEPTIDE"/>
    <property type="match status" value="1"/>
</dbReference>
<dbReference type="Pfam" id="PF00212">
    <property type="entry name" value="ANP"/>
    <property type="match status" value="1"/>
</dbReference>
<dbReference type="PRINTS" id="PR00712">
    <property type="entry name" value="BNATPEPTIDE"/>
</dbReference>
<dbReference type="PRINTS" id="PR00710">
    <property type="entry name" value="NATPEPTIDES"/>
</dbReference>
<dbReference type="SMART" id="SM00183">
    <property type="entry name" value="NAT_PEP"/>
    <property type="match status" value="1"/>
</dbReference>
<dbReference type="PROSITE" id="PS00263">
    <property type="entry name" value="NATRIURETIC_PEPTIDE"/>
    <property type="match status" value="1"/>
</dbReference>
<protein>
    <recommendedName>
        <fullName evidence="5">Natriuretic peptide Na-NP</fullName>
    </recommendedName>
</protein>
<feature type="signal peptide" evidence="2">
    <location>
        <begin position="1"/>
        <end position="25"/>
    </location>
</feature>
<feature type="propeptide" id="PRO_0000403800" evidence="4">
    <location>
        <begin position="26"/>
        <end position="83"/>
    </location>
</feature>
<feature type="chain" id="PRO_0000403801" description="Natriuretic peptide Na-NP" evidence="4">
    <location>
        <begin position="84"/>
        <end position="128"/>
    </location>
</feature>
<feature type="propeptide" id="PRO_0000403802" evidence="4">
    <location>
        <begin position="129"/>
        <end position="165"/>
    </location>
</feature>
<feature type="region of interest" description="Disordered" evidence="3">
    <location>
        <begin position="56"/>
        <end position="100"/>
    </location>
</feature>
<feature type="region of interest" description="Disordered" evidence="3">
    <location>
        <begin position="135"/>
        <end position="165"/>
    </location>
</feature>
<feature type="compositionally biased region" description="Basic and acidic residues" evidence="3">
    <location>
        <begin position="56"/>
        <end position="68"/>
    </location>
</feature>
<feature type="compositionally biased region" description="Basic and acidic residues" evidence="3">
    <location>
        <begin position="135"/>
        <end position="149"/>
    </location>
</feature>
<feature type="compositionally biased region" description="Gly residues" evidence="3">
    <location>
        <begin position="154"/>
        <end position="165"/>
    </location>
</feature>
<feature type="disulfide bond" evidence="1">
    <location>
        <begin position="94"/>
        <end position="110"/>
    </location>
</feature>
<name>VNP_NAJAT</name>
<keyword id="KW-0903">Direct protein sequencing</keyword>
<keyword id="KW-1015">Disulfide bond</keyword>
<keyword id="KW-0382">Hypotensive agent</keyword>
<keyword id="KW-0964">Secreted</keyword>
<keyword id="KW-0732">Signal</keyword>
<keyword id="KW-0800">Toxin</keyword>
<keyword id="KW-0838">Vasoactive</keyword>
<keyword id="KW-0840">Vasodilator</keyword>
<accession>D9IX97</accession>